<protein>
    <recommendedName>
        <fullName evidence="1">Dual-action ribosomal maturation protein DarP</fullName>
    </recommendedName>
    <alternativeName>
        <fullName evidence="1">Large ribosomal subunit assembly factor DarP</fullName>
    </alternativeName>
</protein>
<organism>
    <name type="scientific">Yersinia pseudotuberculosis serotype O:1b (strain IP 31758)</name>
    <dbReference type="NCBI Taxonomy" id="349747"/>
    <lineage>
        <taxon>Bacteria</taxon>
        <taxon>Pseudomonadati</taxon>
        <taxon>Pseudomonadota</taxon>
        <taxon>Gammaproteobacteria</taxon>
        <taxon>Enterobacterales</taxon>
        <taxon>Yersiniaceae</taxon>
        <taxon>Yersinia</taxon>
    </lineage>
</organism>
<reference key="1">
    <citation type="journal article" date="2007" name="PLoS Genet.">
        <title>The complete genome sequence of Yersinia pseudotuberculosis IP31758, the causative agent of Far East scarlet-like fever.</title>
        <authorList>
            <person name="Eppinger M."/>
            <person name="Rosovitz M.J."/>
            <person name="Fricke W.F."/>
            <person name="Rasko D.A."/>
            <person name="Kokorina G."/>
            <person name="Fayolle C."/>
            <person name="Lindler L.E."/>
            <person name="Carniel E."/>
            <person name="Ravel J."/>
        </authorList>
    </citation>
    <scope>NUCLEOTIDE SEQUENCE [LARGE SCALE GENOMIC DNA]</scope>
    <source>
        <strain>IP 31758</strain>
    </source>
</reference>
<evidence type="ECO:0000255" key="1">
    <source>
        <dbReference type="HAMAP-Rule" id="MF_00765"/>
    </source>
</evidence>
<accession>A7FDU0</accession>
<proteinExistence type="inferred from homology"/>
<name>DARP_YERP3</name>
<keyword id="KW-0963">Cytoplasm</keyword>
<keyword id="KW-0690">Ribosome biogenesis</keyword>
<keyword id="KW-0694">RNA-binding</keyword>
<keyword id="KW-0699">rRNA-binding</keyword>
<gene>
    <name evidence="1" type="primary">darP</name>
    <name type="ordered locus">YpsIP31758_0425</name>
</gene>
<comment type="function">
    <text evidence="1">Member of a network of 50S ribosomal subunit biogenesis factors which assembles along the 30S-50S interface, preventing incorrect 23S rRNA structures from forming. Promotes peptidyl transferase center (PTC) maturation.</text>
</comment>
<comment type="subcellular location">
    <subcellularLocation>
        <location evidence="1">Cytoplasm</location>
    </subcellularLocation>
    <text evidence="1">Associates with late stage pre-50S ribosomal subunits.</text>
</comment>
<comment type="similarity">
    <text evidence="1">Belongs to the DarP family.</text>
</comment>
<feature type="chain" id="PRO_1000062226" description="Dual-action ribosomal maturation protein DarP">
    <location>
        <begin position="1"/>
        <end position="182"/>
    </location>
</feature>
<dbReference type="EMBL" id="CP000720">
    <property type="protein sequence ID" value="ABS46471.1"/>
    <property type="molecule type" value="Genomic_DNA"/>
</dbReference>
<dbReference type="SMR" id="A7FDU0"/>
<dbReference type="KEGG" id="ypi:YpsIP31758_0425"/>
<dbReference type="HOGENOM" id="CLU_106757_2_0_6"/>
<dbReference type="Proteomes" id="UP000002412">
    <property type="component" value="Chromosome"/>
</dbReference>
<dbReference type="GO" id="GO:0005829">
    <property type="term" value="C:cytosol"/>
    <property type="evidence" value="ECO:0007669"/>
    <property type="project" value="TreeGrafter"/>
</dbReference>
<dbReference type="GO" id="GO:0043022">
    <property type="term" value="F:ribosome binding"/>
    <property type="evidence" value="ECO:0007669"/>
    <property type="project" value="UniProtKB-UniRule"/>
</dbReference>
<dbReference type="GO" id="GO:0019843">
    <property type="term" value="F:rRNA binding"/>
    <property type="evidence" value="ECO:0007669"/>
    <property type="project" value="UniProtKB-UniRule"/>
</dbReference>
<dbReference type="GO" id="GO:1902626">
    <property type="term" value="P:assembly of large subunit precursor of preribosome"/>
    <property type="evidence" value="ECO:0007669"/>
    <property type="project" value="UniProtKB-UniRule"/>
</dbReference>
<dbReference type="CDD" id="cd16331">
    <property type="entry name" value="YjgA-like"/>
    <property type="match status" value="1"/>
</dbReference>
<dbReference type="FunFam" id="1.10.60.30:FF:000001">
    <property type="entry name" value="UPF0307 protein YjgA"/>
    <property type="match status" value="1"/>
</dbReference>
<dbReference type="FunFam" id="1.10.60.30:FF:000002">
    <property type="entry name" value="UPF0307 protein YjgA"/>
    <property type="match status" value="1"/>
</dbReference>
<dbReference type="Gene3D" id="1.10.60.30">
    <property type="entry name" value="PSPTO4464-like domains"/>
    <property type="match status" value="2"/>
</dbReference>
<dbReference type="HAMAP" id="MF_00765">
    <property type="entry name" value="DarP"/>
    <property type="match status" value="1"/>
</dbReference>
<dbReference type="InterPro" id="IPR006839">
    <property type="entry name" value="DarP"/>
</dbReference>
<dbReference type="InterPro" id="IPR023153">
    <property type="entry name" value="DarP_sf"/>
</dbReference>
<dbReference type="NCBIfam" id="NF003593">
    <property type="entry name" value="PRK05255.1-1"/>
    <property type="match status" value="1"/>
</dbReference>
<dbReference type="PANTHER" id="PTHR38101">
    <property type="entry name" value="UPF0307 PROTEIN YJGA"/>
    <property type="match status" value="1"/>
</dbReference>
<dbReference type="PANTHER" id="PTHR38101:SF1">
    <property type="entry name" value="UPF0307 PROTEIN YJGA"/>
    <property type="match status" value="1"/>
</dbReference>
<dbReference type="Pfam" id="PF04751">
    <property type="entry name" value="DarP"/>
    <property type="match status" value="1"/>
</dbReference>
<dbReference type="PIRSF" id="PIRSF016183">
    <property type="entry name" value="UCP016183"/>
    <property type="match status" value="1"/>
</dbReference>
<dbReference type="SUPFAM" id="SSF158710">
    <property type="entry name" value="PSPTO4464-like"/>
    <property type="match status" value="1"/>
</dbReference>
<sequence length="182" mass="21128">MNKQPEDWLDDVPENKNDDDDEIIWVSKSEIKRDAEALKDLGTELVDLGKNALERIPLDEDLLAAIELAQKIKKEGRRRQIQLIGKMLRARDVEPIQTALDKLKNRHNQQVSLFHKLETLRDRLIAEGDDAIPTVLELYPDADRQQLRSLVRNAQKEQAANKPPKSFRQIFSYLRELAEKQQ</sequence>